<evidence type="ECO:0000255" key="1">
    <source>
        <dbReference type="HAMAP-Rule" id="MF_00741"/>
    </source>
</evidence>
<gene>
    <name evidence="1" type="primary">purM</name>
    <name type="ordered locus">LL1524</name>
    <name type="ORF">L165202</name>
</gene>
<proteinExistence type="inferred from homology"/>
<keyword id="KW-0067">ATP-binding</keyword>
<keyword id="KW-0963">Cytoplasm</keyword>
<keyword id="KW-0436">Ligase</keyword>
<keyword id="KW-0547">Nucleotide-binding</keyword>
<keyword id="KW-0658">Purine biosynthesis</keyword>
<keyword id="KW-1185">Reference proteome</keyword>
<reference key="1">
    <citation type="journal article" date="2001" name="Genome Res.">
        <title>The complete genome sequence of the lactic acid bacterium Lactococcus lactis ssp. lactis IL1403.</title>
        <authorList>
            <person name="Bolotin A."/>
            <person name="Wincker P."/>
            <person name="Mauger S."/>
            <person name="Jaillon O."/>
            <person name="Malarme K."/>
            <person name="Weissenbach J."/>
            <person name="Ehrlich S.D."/>
            <person name="Sorokin A."/>
        </authorList>
    </citation>
    <scope>NUCLEOTIDE SEQUENCE [LARGE SCALE GENOMIC DNA]</scope>
    <source>
        <strain>IL1403</strain>
    </source>
</reference>
<comment type="catalytic activity">
    <reaction evidence="1">
        <text>2-formamido-N(1)-(5-O-phospho-beta-D-ribosyl)acetamidine + ATP = 5-amino-1-(5-phospho-beta-D-ribosyl)imidazole + ADP + phosphate + H(+)</text>
        <dbReference type="Rhea" id="RHEA:23032"/>
        <dbReference type="ChEBI" id="CHEBI:15378"/>
        <dbReference type="ChEBI" id="CHEBI:30616"/>
        <dbReference type="ChEBI" id="CHEBI:43474"/>
        <dbReference type="ChEBI" id="CHEBI:137981"/>
        <dbReference type="ChEBI" id="CHEBI:147287"/>
        <dbReference type="ChEBI" id="CHEBI:456216"/>
        <dbReference type="EC" id="6.3.3.1"/>
    </reaction>
</comment>
<comment type="pathway">
    <text evidence="1">Purine metabolism; IMP biosynthesis via de novo pathway; 5-amino-1-(5-phospho-D-ribosyl)imidazole from N(2)-formyl-N(1)-(5-phospho-D-ribosyl)glycinamide: step 2/2.</text>
</comment>
<comment type="subcellular location">
    <subcellularLocation>
        <location evidence="1">Cytoplasm</location>
    </subcellularLocation>
</comment>
<comment type="similarity">
    <text evidence="1">Belongs to the AIR synthase family.</text>
</comment>
<sequence length="338" mass="36139">MSENAYAKSGVDVEAGYEVVSRIKKHVAKTERLGVLGALGGFGGSFDLSVLDVKEPVLISGTDGVGTKLMLAIQADKHDTIGIDCVAMCVNDIIAAGAEPLYFLDYIATGKNIPEKLEQVVAGVAEGCLQAGAALIGGETAEMPGMYDEDDYDLAGFAVGVAEKSQLIDGEKDVEAGDVLLGLASSGIHSNGYSLVRKVFSDFDLNESLPELDQSLIDTLLTPTKIYVKELLPLIKQNKIKGIAHITGGGFHENLPRMFGNSLSAEIVEGSWNILPIFKALEKYGDIKHEEMYEIFNMGIGMVIAVAPENAEALKKVLNAFEIGKMVKRQDSAVVIKK</sequence>
<feature type="chain" id="PRO_0000148216" description="Phosphoribosylformylglycinamidine cyclo-ligase">
    <location>
        <begin position="1"/>
        <end position="338"/>
    </location>
</feature>
<organism>
    <name type="scientific">Lactococcus lactis subsp. lactis (strain IL1403)</name>
    <name type="common">Streptococcus lactis</name>
    <dbReference type="NCBI Taxonomy" id="272623"/>
    <lineage>
        <taxon>Bacteria</taxon>
        <taxon>Bacillati</taxon>
        <taxon>Bacillota</taxon>
        <taxon>Bacilli</taxon>
        <taxon>Lactobacillales</taxon>
        <taxon>Streptococcaceae</taxon>
        <taxon>Lactococcus</taxon>
    </lineage>
</organism>
<name>PUR5_LACLA</name>
<dbReference type="EC" id="6.3.3.1" evidence="1"/>
<dbReference type="EMBL" id="AE005176">
    <property type="protein sequence ID" value="AAK05622.1"/>
    <property type="molecule type" value="Genomic_DNA"/>
</dbReference>
<dbReference type="PIR" id="D86815">
    <property type="entry name" value="D86815"/>
</dbReference>
<dbReference type="RefSeq" id="NP_267680.1">
    <property type="nucleotide sequence ID" value="NC_002662.1"/>
</dbReference>
<dbReference type="SMR" id="Q9CFF4"/>
<dbReference type="PaxDb" id="272623-L165202"/>
<dbReference type="EnsemblBacteria" id="AAK05622">
    <property type="protein sequence ID" value="AAK05622"/>
    <property type="gene ID" value="L165202"/>
</dbReference>
<dbReference type="KEGG" id="lla:L165202"/>
<dbReference type="PATRIC" id="fig|272623.7.peg.1635"/>
<dbReference type="eggNOG" id="COG0150">
    <property type="taxonomic scope" value="Bacteria"/>
</dbReference>
<dbReference type="HOGENOM" id="CLU_047116_0_0_9"/>
<dbReference type="OrthoDB" id="9802507at2"/>
<dbReference type="UniPathway" id="UPA00074">
    <property type="reaction ID" value="UER00129"/>
</dbReference>
<dbReference type="Proteomes" id="UP000002196">
    <property type="component" value="Chromosome"/>
</dbReference>
<dbReference type="GO" id="GO:0005829">
    <property type="term" value="C:cytosol"/>
    <property type="evidence" value="ECO:0007669"/>
    <property type="project" value="TreeGrafter"/>
</dbReference>
<dbReference type="GO" id="GO:0005524">
    <property type="term" value="F:ATP binding"/>
    <property type="evidence" value="ECO:0007669"/>
    <property type="project" value="UniProtKB-KW"/>
</dbReference>
<dbReference type="GO" id="GO:0004637">
    <property type="term" value="F:phosphoribosylamine-glycine ligase activity"/>
    <property type="evidence" value="ECO:0007669"/>
    <property type="project" value="TreeGrafter"/>
</dbReference>
<dbReference type="GO" id="GO:0004641">
    <property type="term" value="F:phosphoribosylformylglycinamidine cyclo-ligase activity"/>
    <property type="evidence" value="ECO:0007669"/>
    <property type="project" value="UniProtKB-UniRule"/>
</dbReference>
<dbReference type="GO" id="GO:0006189">
    <property type="term" value="P:'de novo' IMP biosynthetic process"/>
    <property type="evidence" value="ECO:0007669"/>
    <property type="project" value="UniProtKB-UniRule"/>
</dbReference>
<dbReference type="GO" id="GO:0046084">
    <property type="term" value="P:adenine biosynthetic process"/>
    <property type="evidence" value="ECO:0007669"/>
    <property type="project" value="TreeGrafter"/>
</dbReference>
<dbReference type="CDD" id="cd02196">
    <property type="entry name" value="PurM"/>
    <property type="match status" value="1"/>
</dbReference>
<dbReference type="FunFam" id="3.30.1330.10:FF:000001">
    <property type="entry name" value="Phosphoribosylformylglycinamidine cyclo-ligase"/>
    <property type="match status" value="1"/>
</dbReference>
<dbReference type="FunFam" id="3.90.650.10:FF:000011">
    <property type="entry name" value="Phosphoribosylformylglycinamidine cyclo-ligase"/>
    <property type="match status" value="1"/>
</dbReference>
<dbReference type="Gene3D" id="3.90.650.10">
    <property type="entry name" value="PurM-like C-terminal domain"/>
    <property type="match status" value="1"/>
</dbReference>
<dbReference type="Gene3D" id="3.30.1330.10">
    <property type="entry name" value="PurM-like, N-terminal domain"/>
    <property type="match status" value="1"/>
</dbReference>
<dbReference type="HAMAP" id="MF_00741">
    <property type="entry name" value="AIRS"/>
    <property type="match status" value="1"/>
</dbReference>
<dbReference type="InterPro" id="IPR010918">
    <property type="entry name" value="PurM-like_C_dom"/>
</dbReference>
<dbReference type="InterPro" id="IPR036676">
    <property type="entry name" value="PurM-like_C_sf"/>
</dbReference>
<dbReference type="InterPro" id="IPR016188">
    <property type="entry name" value="PurM-like_N"/>
</dbReference>
<dbReference type="InterPro" id="IPR036921">
    <property type="entry name" value="PurM-like_N_sf"/>
</dbReference>
<dbReference type="InterPro" id="IPR004733">
    <property type="entry name" value="PurM_cligase"/>
</dbReference>
<dbReference type="NCBIfam" id="TIGR00878">
    <property type="entry name" value="purM"/>
    <property type="match status" value="1"/>
</dbReference>
<dbReference type="PANTHER" id="PTHR10520:SF12">
    <property type="entry name" value="TRIFUNCTIONAL PURINE BIOSYNTHETIC PROTEIN ADENOSINE-3"/>
    <property type="match status" value="1"/>
</dbReference>
<dbReference type="PANTHER" id="PTHR10520">
    <property type="entry name" value="TRIFUNCTIONAL PURINE BIOSYNTHETIC PROTEIN ADENOSINE-3-RELATED"/>
    <property type="match status" value="1"/>
</dbReference>
<dbReference type="Pfam" id="PF00586">
    <property type="entry name" value="AIRS"/>
    <property type="match status" value="1"/>
</dbReference>
<dbReference type="Pfam" id="PF02769">
    <property type="entry name" value="AIRS_C"/>
    <property type="match status" value="1"/>
</dbReference>
<dbReference type="SUPFAM" id="SSF56042">
    <property type="entry name" value="PurM C-terminal domain-like"/>
    <property type="match status" value="1"/>
</dbReference>
<dbReference type="SUPFAM" id="SSF55326">
    <property type="entry name" value="PurM N-terminal domain-like"/>
    <property type="match status" value="1"/>
</dbReference>
<accession>Q9CFF4</accession>
<protein>
    <recommendedName>
        <fullName evidence="1">Phosphoribosylformylglycinamidine cyclo-ligase</fullName>
        <ecNumber evidence="1">6.3.3.1</ecNumber>
    </recommendedName>
    <alternativeName>
        <fullName evidence="1">AIR synthase</fullName>
    </alternativeName>
    <alternativeName>
        <fullName evidence="1">AIRS</fullName>
    </alternativeName>
    <alternativeName>
        <fullName evidence="1">Phosphoribosyl-aminoimidazole synthetase</fullName>
    </alternativeName>
</protein>